<accession>A6T3J1</accession>
<dbReference type="EMBL" id="CP000269">
    <property type="protein sequence ID" value="ABR88342.1"/>
    <property type="status" value="ALT_INIT"/>
    <property type="molecule type" value="Genomic_DNA"/>
</dbReference>
<dbReference type="RefSeq" id="WP_041296706.1">
    <property type="nucleotide sequence ID" value="NC_009659.1"/>
</dbReference>
<dbReference type="SMR" id="A6T3J1"/>
<dbReference type="STRING" id="375286.mma_3398"/>
<dbReference type="KEGG" id="mms:mma_3398"/>
<dbReference type="eggNOG" id="COG0199">
    <property type="taxonomic scope" value="Bacteria"/>
</dbReference>
<dbReference type="HOGENOM" id="CLU_139869_0_1_4"/>
<dbReference type="OrthoDB" id="9810484at2"/>
<dbReference type="Proteomes" id="UP000006388">
    <property type="component" value="Chromosome"/>
</dbReference>
<dbReference type="GO" id="GO:0005737">
    <property type="term" value="C:cytoplasm"/>
    <property type="evidence" value="ECO:0007669"/>
    <property type="project" value="UniProtKB-ARBA"/>
</dbReference>
<dbReference type="GO" id="GO:0015935">
    <property type="term" value="C:small ribosomal subunit"/>
    <property type="evidence" value="ECO:0007669"/>
    <property type="project" value="TreeGrafter"/>
</dbReference>
<dbReference type="GO" id="GO:0019843">
    <property type="term" value="F:rRNA binding"/>
    <property type="evidence" value="ECO:0007669"/>
    <property type="project" value="UniProtKB-UniRule"/>
</dbReference>
<dbReference type="GO" id="GO:0003735">
    <property type="term" value="F:structural constituent of ribosome"/>
    <property type="evidence" value="ECO:0007669"/>
    <property type="project" value="InterPro"/>
</dbReference>
<dbReference type="GO" id="GO:0006412">
    <property type="term" value="P:translation"/>
    <property type="evidence" value="ECO:0007669"/>
    <property type="project" value="UniProtKB-UniRule"/>
</dbReference>
<dbReference type="FunFam" id="1.10.287.1480:FF:000001">
    <property type="entry name" value="30S ribosomal protein S14"/>
    <property type="match status" value="1"/>
</dbReference>
<dbReference type="Gene3D" id="1.10.287.1480">
    <property type="match status" value="1"/>
</dbReference>
<dbReference type="HAMAP" id="MF_00537">
    <property type="entry name" value="Ribosomal_uS14_1"/>
    <property type="match status" value="1"/>
</dbReference>
<dbReference type="InterPro" id="IPR001209">
    <property type="entry name" value="Ribosomal_uS14"/>
</dbReference>
<dbReference type="InterPro" id="IPR023036">
    <property type="entry name" value="Ribosomal_uS14_bac/plastid"/>
</dbReference>
<dbReference type="NCBIfam" id="NF006477">
    <property type="entry name" value="PRK08881.1"/>
    <property type="match status" value="1"/>
</dbReference>
<dbReference type="PANTHER" id="PTHR19836">
    <property type="entry name" value="30S RIBOSOMAL PROTEIN S14"/>
    <property type="match status" value="1"/>
</dbReference>
<dbReference type="PANTHER" id="PTHR19836:SF19">
    <property type="entry name" value="SMALL RIBOSOMAL SUBUNIT PROTEIN US14M"/>
    <property type="match status" value="1"/>
</dbReference>
<dbReference type="Pfam" id="PF00253">
    <property type="entry name" value="Ribosomal_S14"/>
    <property type="match status" value="1"/>
</dbReference>
<dbReference type="SUPFAM" id="SSF57716">
    <property type="entry name" value="Glucocorticoid receptor-like (DNA-binding domain)"/>
    <property type="match status" value="1"/>
</dbReference>
<name>RS14_JANMA</name>
<gene>
    <name evidence="1" type="primary">rpsN</name>
    <name type="ordered locus">mma_3398</name>
</gene>
<comment type="function">
    <text evidence="1">Binds 16S rRNA, required for the assembly of 30S particles and may also be responsible for determining the conformation of the 16S rRNA at the A site.</text>
</comment>
<comment type="subunit">
    <text evidence="1">Part of the 30S ribosomal subunit. Contacts proteins S3 and S10.</text>
</comment>
<comment type="similarity">
    <text evidence="1">Belongs to the universal ribosomal protein uS14 family.</text>
</comment>
<comment type="sequence caution" evidence="2">
    <conflict type="erroneous initiation">
        <sequence resource="EMBL-CDS" id="ABR88342"/>
    </conflict>
</comment>
<organism>
    <name type="scientific">Janthinobacterium sp. (strain Marseille)</name>
    <name type="common">Minibacterium massiliensis</name>
    <dbReference type="NCBI Taxonomy" id="375286"/>
    <lineage>
        <taxon>Bacteria</taxon>
        <taxon>Pseudomonadati</taxon>
        <taxon>Pseudomonadota</taxon>
        <taxon>Betaproteobacteria</taxon>
        <taxon>Burkholderiales</taxon>
        <taxon>Oxalobacteraceae</taxon>
        <taxon>Janthinobacterium</taxon>
    </lineage>
</organism>
<sequence>MAKLALINREQKRADLVKKYAGKRAELKAIIDDQSKSEEERYEARLKLQALPRNSAPTRQRNRCTLTGRPRGTFRKFGLGRIKLREIAMRGEIPGMTKASW</sequence>
<evidence type="ECO:0000255" key="1">
    <source>
        <dbReference type="HAMAP-Rule" id="MF_00537"/>
    </source>
</evidence>
<evidence type="ECO:0000305" key="2"/>
<reference key="1">
    <citation type="journal article" date="2007" name="PLoS Genet.">
        <title>Genome analysis of Minibacterium massiliensis highlights the convergent evolution of water-living bacteria.</title>
        <authorList>
            <person name="Audic S."/>
            <person name="Robert C."/>
            <person name="Campagna B."/>
            <person name="Parinello H."/>
            <person name="Claverie J.-M."/>
            <person name="Raoult D."/>
            <person name="Drancourt M."/>
        </authorList>
    </citation>
    <scope>NUCLEOTIDE SEQUENCE [LARGE SCALE GENOMIC DNA]</scope>
    <source>
        <strain>Marseille</strain>
    </source>
</reference>
<feature type="chain" id="PRO_0000354386" description="Small ribosomal subunit protein uS14">
    <location>
        <begin position="1"/>
        <end position="101"/>
    </location>
</feature>
<protein>
    <recommendedName>
        <fullName evidence="1">Small ribosomal subunit protein uS14</fullName>
    </recommendedName>
    <alternativeName>
        <fullName evidence="2">30S ribosomal protein S14</fullName>
    </alternativeName>
</protein>
<keyword id="KW-0687">Ribonucleoprotein</keyword>
<keyword id="KW-0689">Ribosomal protein</keyword>
<keyword id="KW-0694">RNA-binding</keyword>
<keyword id="KW-0699">rRNA-binding</keyword>
<proteinExistence type="inferred from homology"/>